<name>TPX_STRPA</name>
<evidence type="ECO:0000250" key="1"/>
<evidence type="ECO:0000255" key="2">
    <source>
        <dbReference type="HAMAP-Rule" id="MF_00269"/>
    </source>
</evidence>
<reference key="1">
    <citation type="journal article" date="1989" name="Infect. Immun.">
        <title>Nucleotide sequence analysis of a type 1 fimbrial gene of Streptococcus sanguis FW213.</title>
        <authorList>
            <person name="Fenno J.C."/>
            <person name="Leblanc D.J."/>
            <person name="Fives-Taylor P.M."/>
        </authorList>
    </citation>
    <scope>NUCLEOTIDE SEQUENCE [GENOMIC DNA]</scope>
    <source>
        <strain>FW213</strain>
    </source>
</reference>
<organism>
    <name type="scientific">Streptococcus parasanguinis</name>
    <dbReference type="NCBI Taxonomy" id="1318"/>
    <lineage>
        <taxon>Bacteria</taxon>
        <taxon>Bacillati</taxon>
        <taxon>Bacillota</taxon>
        <taxon>Bacilli</taxon>
        <taxon>Lactobacillales</taxon>
        <taxon>Streptococcaceae</taxon>
        <taxon>Streptococcus</taxon>
    </lineage>
</organism>
<proteinExistence type="inferred from homology"/>
<feature type="initiator methionine" description="Removed" evidence="1">
    <location>
        <position position="1"/>
    </location>
</feature>
<feature type="chain" id="PRO_0000187912" description="Thiol peroxidase">
    <location>
        <begin position="2"/>
        <end position="164"/>
    </location>
</feature>
<feature type="domain" description="Thioredoxin" evidence="2">
    <location>
        <begin position="16"/>
        <end position="162"/>
    </location>
</feature>
<feature type="active site" description="Cysteine sulfenic acid (-SOH) intermediate" evidence="2">
    <location>
        <position position="58"/>
    </location>
</feature>
<feature type="disulfide bond" description="Redox-active" evidence="2">
    <location>
        <begin position="58"/>
        <end position="92"/>
    </location>
</feature>
<gene>
    <name evidence="2" type="primary">tpx</name>
</gene>
<keyword id="KW-0049">Antioxidant</keyword>
<keyword id="KW-1015">Disulfide bond</keyword>
<keyword id="KW-0560">Oxidoreductase</keyword>
<keyword id="KW-0575">Peroxidase</keyword>
<keyword id="KW-0676">Redox-active center</keyword>
<dbReference type="EC" id="1.11.1.24" evidence="2"/>
<dbReference type="EMBL" id="M26130">
    <property type="protein sequence ID" value="AAA53078.1"/>
    <property type="molecule type" value="Genomic_DNA"/>
</dbReference>
<dbReference type="PIR" id="S61913">
    <property type="entry name" value="S61913"/>
</dbReference>
<dbReference type="RefSeq" id="WP_014712824.1">
    <property type="nucleotide sequence ID" value="NZ_LAWB01000013.1"/>
</dbReference>
<dbReference type="SMR" id="P31307"/>
<dbReference type="GO" id="GO:0008379">
    <property type="term" value="F:thioredoxin peroxidase activity"/>
    <property type="evidence" value="ECO:0007669"/>
    <property type="project" value="UniProtKB-UniRule"/>
</dbReference>
<dbReference type="CDD" id="cd03014">
    <property type="entry name" value="PRX_Atyp2cys"/>
    <property type="match status" value="1"/>
</dbReference>
<dbReference type="Gene3D" id="3.40.30.10">
    <property type="entry name" value="Glutaredoxin"/>
    <property type="match status" value="1"/>
</dbReference>
<dbReference type="HAMAP" id="MF_00269">
    <property type="entry name" value="Tpx"/>
    <property type="match status" value="1"/>
</dbReference>
<dbReference type="InterPro" id="IPR013740">
    <property type="entry name" value="Redoxin"/>
</dbReference>
<dbReference type="InterPro" id="IPR036249">
    <property type="entry name" value="Thioredoxin-like_sf"/>
</dbReference>
<dbReference type="InterPro" id="IPR013766">
    <property type="entry name" value="Thioredoxin_domain"/>
</dbReference>
<dbReference type="InterPro" id="IPR002065">
    <property type="entry name" value="TPX"/>
</dbReference>
<dbReference type="InterPro" id="IPR018219">
    <property type="entry name" value="Tpx_CS"/>
</dbReference>
<dbReference type="InterPro" id="IPR050455">
    <property type="entry name" value="Tpx_Peroxidase_subfamily"/>
</dbReference>
<dbReference type="NCBIfam" id="NF001808">
    <property type="entry name" value="PRK00522.1"/>
    <property type="match status" value="1"/>
</dbReference>
<dbReference type="PANTHER" id="PTHR43110">
    <property type="entry name" value="THIOL PEROXIDASE"/>
    <property type="match status" value="1"/>
</dbReference>
<dbReference type="PANTHER" id="PTHR43110:SF1">
    <property type="entry name" value="THIOL PEROXIDASE"/>
    <property type="match status" value="1"/>
</dbReference>
<dbReference type="Pfam" id="PF08534">
    <property type="entry name" value="Redoxin"/>
    <property type="match status" value="1"/>
</dbReference>
<dbReference type="SUPFAM" id="SSF52833">
    <property type="entry name" value="Thioredoxin-like"/>
    <property type="match status" value="1"/>
</dbReference>
<dbReference type="PROSITE" id="PS51352">
    <property type="entry name" value="THIOREDOXIN_2"/>
    <property type="match status" value="1"/>
</dbReference>
<dbReference type="PROSITE" id="PS01265">
    <property type="entry name" value="TPX"/>
    <property type="match status" value="1"/>
</dbReference>
<comment type="function">
    <text evidence="2">Thiol-specific peroxidase that catalyzes the reduction of hydrogen peroxide and organic hydroperoxides to water and alcohols, respectively. Plays a role in cell protection against oxidative stress by detoxifying peroxides.</text>
</comment>
<comment type="catalytic activity">
    <reaction evidence="2">
        <text>a hydroperoxide + [thioredoxin]-dithiol = an alcohol + [thioredoxin]-disulfide + H2O</text>
        <dbReference type="Rhea" id="RHEA:62620"/>
        <dbReference type="Rhea" id="RHEA-COMP:10698"/>
        <dbReference type="Rhea" id="RHEA-COMP:10700"/>
        <dbReference type="ChEBI" id="CHEBI:15377"/>
        <dbReference type="ChEBI" id="CHEBI:29950"/>
        <dbReference type="ChEBI" id="CHEBI:30879"/>
        <dbReference type="ChEBI" id="CHEBI:35924"/>
        <dbReference type="ChEBI" id="CHEBI:50058"/>
        <dbReference type="EC" id="1.11.1.24"/>
    </reaction>
</comment>
<comment type="subunit">
    <text evidence="2">Homodimer.</text>
</comment>
<comment type="miscellaneous">
    <text evidence="2">The active site is a conserved redox-active cysteine residue, the peroxidatic cysteine (C(P)), which makes the nucleophilic attack on the peroxide substrate. The peroxide oxidizes the C(P)-SH to cysteine sulfenic acid (C(P)-SOH), which then reacts with another cysteine residue, the resolving cysteine (C(R)), to form a disulfide bridge. The disulfide is subsequently reduced by an appropriate electron donor to complete the catalytic cycle. In this atypical 2-Cys peroxiredoxin, C(R) is present in the same subunit to form an intramolecular disulfide. The disulfide is subsequently reduced by thioredoxin.</text>
</comment>
<comment type="similarity">
    <text evidence="2">Belongs to the peroxiredoxin family. Tpx subfamily.</text>
</comment>
<protein>
    <recommendedName>
        <fullName evidence="2">Thiol peroxidase</fullName>
        <shortName evidence="2">Tpx</shortName>
        <ecNumber evidence="2">1.11.1.24</ecNumber>
    </recommendedName>
    <alternativeName>
        <fullName evidence="2">Peroxiredoxin tpx</fullName>
        <shortName evidence="2">Prx</shortName>
    </alternativeName>
    <alternativeName>
        <fullName evidence="2">Thioredoxin peroxidase</fullName>
    </alternativeName>
    <alternativeName>
        <fullName evidence="2">Thioredoxin-dependent peroxiredoxin</fullName>
    </alternativeName>
</protein>
<accession>P31307</accession>
<sequence>MATFLGNPVTFTGSQLQVGEIAHDFSLITPALEKKSLADFAGKKKVLSIIPSIDTGICSMQTRHFNKTLSDLEDTVVLTVSVDLPFAQGKWCAAEGLDNAIMLSDYYDHSFGKAYGLLINEWHLLARAVLVLDADNKITYVEYLDNINSEPNYDAAIEAVKVLG</sequence>